<feature type="chain" id="PRO_1000077941" description="UvrABC system protein B">
    <location>
        <begin position="1"/>
        <end position="678"/>
    </location>
</feature>
<feature type="domain" description="Helicase ATP-binding" evidence="1">
    <location>
        <begin position="26"/>
        <end position="185"/>
    </location>
</feature>
<feature type="domain" description="Helicase C-terminal" evidence="1">
    <location>
        <begin position="430"/>
        <end position="596"/>
    </location>
</feature>
<feature type="domain" description="UVR" evidence="1">
    <location>
        <begin position="635"/>
        <end position="670"/>
    </location>
</feature>
<feature type="region of interest" description="Disordered" evidence="2">
    <location>
        <begin position="597"/>
        <end position="630"/>
    </location>
</feature>
<feature type="short sequence motif" description="Beta-hairpin">
    <location>
        <begin position="92"/>
        <end position="115"/>
    </location>
</feature>
<feature type="binding site" evidence="1">
    <location>
        <begin position="39"/>
        <end position="46"/>
    </location>
    <ligand>
        <name>ATP</name>
        <dbReference type="ChEBI" id="CHEBI:30616"/>
    </ligand>
</feature>
<proteinExistence type="inferred from homology"/>
<evidence type="ECO:0000255" key="1">
    <source>
        <dbReference type="HAMAP-Rule" id="MF_00204"/>
    </source>
</evidence>
<evidence type="ECO:0000256" key="2">
    <source>
        <dbReference type="SAM" id="MobiDB-lite"/>
    </source>
</evidence>
<keyword id="KW-0067">ATP-binding</keyword>
<keyword id="KW-0963">Cytoplasm</keyword>
<keyword id="KW-0227">DNA damage</keyword>
<keyword id="KW-0228">DNA excision</keyword>
<keyword id="KW-0234">DNA repair</keyword>
<keyword id="KW-0267">Excision nuclease</keyword>
<keyword id="KW-0347">Helicase</keyword>
<keyword id="KW-0378">Hydrolase</keyword>
<keyword id="KW-0547">Nucleotide-binding</keyword>
<keyword id="KW-0742">SOS response</keyword>
<protein>
    <recommendedName>
        <fullName evidence="1">UvrABC system protein B</fullName>
        <shortName evidence="1">Protein UvrB</shortName>
    </recommendedName>
    <alternativeName>
        <fullName evidence="1">Excinuclease ABC subunit B</fullName>
    </alternativeName>
</protein>
<comment type="function">
    <text evidence="1">The UvrABC repair system catalyzes the recognition and processing of DNA lesions. A damage recognition complex composed of 2 UvrA and 2 UvrB subunits scans DNA for abnormalities. Upon binding of the UvrA(2)B(2) complex to a putative damaged site, the DNA wraps around one UvrB monomer. DNA wrap is dependent on ATP binding by UvrB and probably causes local melting of the DNA helix, facilitating insertion of UvrB beta-hairpin between the DNA strands. Then UvrB probes one DNA strand for the presence of a lesion. If a lesion is found the UvrA subunits dissociate and the UvrB-DNA preincision complex is formed. This complex is subsequently bound by UvrC and the second UvrB is released. If no lesion is found, the DNA wraps around the other UvrB subunit that will check the other stand for damage.</text>
</comment>
<comment type="subunit">
    <text evidence="1">Forms a heterotetramer with UvrA during the search for lesions. Interacts with UvrC in an incision complex.</text>
</comment>
<comment type="subcellular location">
    <subcellularLocation>
        <location evidence="1">Cytoplasm</location>
    </subcellularLocation>
</comment>
<comment type="domain">
    <text evidence="1">The beta-hairpin motif is involved in DNA binding.</text>
</comment>
<comment type="similarity">
    <text evidence="1">Belongs to the UvrB family.</text>
</comment>
<reference key="1">
    <citation type="journal article" date="2006" name="PLoS Biol.">
        <title>The genome of deep-sea vent chemolithoautotroph Thiomicrospira crunogena XCL-2.</title>
        <authorList>
            <person name="Scott K.M."/>
            <person name="Sievert S.M."/>
            <person name="Abril F.N."/>
            <person name="Ball L.A."/>
            <person name="Barrett C.J."/>
            <person name="Blake R.A."/>
            <person name="Boller A.J."/>
            <person name="Chain P.S.G."/>
            <person name="Clark J.A."/>
            <person name="Davis C.R."/>
            <person name="Detter C."/>
            <person name="Do K.F."/>
            <person name="Dobrinski K.P."/>
            <person name="Faza B.I."/>
            <person name="Fitzpatrick K.A."/>
            <person name="Freyermuth S.K."/>
            <person name="Harmer T.L."/>
            <person name="Hauser L.J."/>
            <person name="Huegler M."/>
            <person name="Kerfeld C.A."/>
            <person name="Klotz M.G."/>
            <person name="Kong W.W."/>
            <person name="Land M."/>
            <person name="Lapidus A."/>
            <person name="Larimer F.W."/>
            <person name="Longo D.L."/>
            <person name="Lucas S."/>
            <person name="Malfatti S.A."/>
            <person name="Massey S.E."/>
            <person name="Martin D.D."/>
            <person name="McCuddin Z."/>
            <person name="Meyer F."/>
            <person name="Moore J.L."/>
            <person name="Ocampo L.H. Jr."/>
            <person name="Paul J.H."/>
            <person name="Paulsen I.T."/>
            <person name="Reep D.K."/>
            <person name="Ren Q."/>
            <person name="Ross R.L."/>
            <person name="Sato P.Y."/>
            <person name="Thomas P."/>
            <person name="Tinkham L.E."/>
            <person name="Zeruth G.T."/>
        </authorList>
    </citation>
    <scope>NUCLEOTIDE SEQUENCE [LARGE SCALE GENOMIC DNA]</scope>
    <source>
        <strain>DSM 25203 / XCL-2</strain>
    </source>
</reference>
<gene>
    <name evidence="1" type="primary">uvrB</name>
    <name type="ordered locus">Tcr_1754</name>
</gene>
<organism>
    <name type="scientific">Hydrogenovibrio crunogenus (strain DSM 25203 / XCL-2)</name>
    <name type="common">Thiomicrospira crunogena</name>
    <dbReference type="NCBI Taxonomy" id="317025"/>
    <lineage>
        <taxon>Bacteria</taxon>
        <taxon>Pseudomonadati</taxon>
        <taxon>Pseudomonadota</taxon>
        <taxon>Gammaproteobacteria</taxon>
        <taxon>Thiotrichales</taxon>
        <taxon>Piscirickettsiaceae</taxon>
        <taxon>Hydrogenovibrio</taxon>
    </lineage>
</organism>
<dbReference type="EMBL" id="CP000109">
    <property type="protein sequence ID" value="ABB42346.1"/>
    <property type="molecule type" value="Genomic_DNA"/>
</dbReference>
<dbReference type="SMR" id="Q31ES7"/>
<dbReference type="STRING" id="317025.Tcr_1754"/>
<dbReference type="KEGG" id="tcx:Tcr_1754"/>
<dbReference type="eggNOG" id="COG0556">
    <property type="taxonomic scope" value="Bacteria"/>
</dbReference>
<dbReference type="HOGENOM" id="CLU_009621_2_1_6"/>
<dbReference type="OrthoDB" id="9806651at2"/>
<dbReference type="GO" id="GO:0005737">
    <property type="term" value="C:cytoplasm"/>
    <property type="evidence" value="ECO:0007669"/>
    <property type="project" value="UniProtKB-SubCell"/>
</dbReference>
<dbReference type="GO" id="GO:0009380">
    <property type="term" value="C:excinuclease repair complex"/>
    <property type="evidence" value="ECO:0007669"/>
    <property type="project" value="InterPro"/>
</dbReference>
<dbReference type="GO" id="GO:0005524">
    <property type="term" value="F:ATP binding"/>
    <property type="evidence" value="ECO:0007669"/>
    <property type="project" value="UniProtKB-UniRule"/>
</dbReference>
<dbReference type="GO" id="GO:0016887">
    <property type="term" value="F:ATP hydrolysis activity"/>
    <property type="evidence" value="ECO:0007669"/>
    <property type="project" value="InterPro"/>
</dbReference>
<dbReference type="GO" id="GO:0003677">
    <property type="term" value="F:DNA binding"/>
    <property type="evidence" value="ECO:0007669"/>
    <property type="project" value="UniProtKB-UniRule"/>
</dbReference>
<dbReference type="GO" id="GO:0009381">
    <property type="term" value="F:excinuclease ABC activity"/>
    <property type="evidence" value="ECO:0007669"/>
    <property type="project" value="UniProtKB-UniRule"/>
</dbReference>
<dbReference type="GO" id="GO:0004386">
    <property type="term" value="F:helicase activity"/>
    <property type="evidence" value="ECO:0007669"/>
    <property type="project" value="UniProtKB-KW"/>
</dbReference>
<dbReference type="GO" id="GO:0006289">
    <property type="term" value="P:nucleotide-excision repair"/>
    <property type="evidence" value="ECO:0007669"/>
    <property type="project" value="UniProtKB-UniRule"/>
</dbReference>
<dbReference type="GO" id="GO:0009432">
    <property type="term" value="P:SOS response"/>
    <property type="evidence" value="ECO:0007669"/>
    <property type="project" value="UniProtKB-UniRule"/>
</dbReference>
<dbReference type="CDD" id="cd17916">
    <property type="entry name" value="DEXHc_UvrB"/>
    <property type="match status" value="1"/>
</dbReference>
<dbReference type="CDD" id="cd18790">
    <property type="entry name" value="SF2_C_UvrB"/>
    <property type="match status" value="1"/>
</dbReference>
<dbReference type="FunFam" id="3.40.50.300:FF:000257">
    <property type="entry name" value="UvrABC system protein B"/>
    <property type="match status" value="1"/>
</dbReference>
<dbReference type="FunFam" id="3.40.50.300:FF:000477">
    <property type="entry name" value="UvrABC system protein B"/>
    <property type="match status" value="1"/>
</dbReference>
<dbReference type="Gene3D" id="6.10.140.240">
    <property type="match status" value="1"/>
</dbReference>
<dbReference type="Gene3D" id="3.40.50.300">
    <property type="entry name" value="P-loop containing nucleotide triphosphate hydrolases"/>
    <property type="match status" value="3"/>
</dbReference>
<dbReference type="Gene3D" id="4.10.860.10">
    <property type="entry name" value="UVR domain"/>
    <property type="match status" value="1"/>
</dbReference>
<dbReference type="HAMAP" id="MF_00204">
    <property type="entry name" value="UvrB"/>
    <property type="match status" value="1"/>
</dbReference>
<dbReference type="InterPro" id="IPR006935">
    <property type="entry name" value="Helicase/UvrB_N"/>
</dbReference>
<dbReference type="InterPro" id="IPR014001">
    <property type="entry name" value="Helicase_ATP-bd"/>
</dbReference>
<dbReference type="InterPro" id="IPR001650">
    <property type="entry name" value="Helicase_C-like"/>
</dbReference>
<dbReference type="InterPro" id="IPR027417">
    <property type="entry name" value="P-loop_NTPase"/>
</dbReference>
<dbReference type="InterPro" id="IPR001943">
    <property type="entry name" value="UVR_dom"/>
</dbReference>
<dbReference type="InterPro" id="IPR036876">
    <property type="entry name" value="UVR_dom_sf"/>
</dbReference>
<dbReference type="InterPro" id="IPR004807">
    <property type="entry name" value="UvrB"/>
</dbReference>
<dbReference type="InterPro" id="IPR041471">
    <property type="entry name" value="UvrB_inter"/>
</dbReference>
<dbReference type="InterPro" id="IPR024759">
    <property type="entry name" value="UvrB_YAD/RRR_dom"/>
</dbReference>
<dbReference type="NCBIfam" id="NF003673">
    <property type="entry name" value="PRK05298.1"/>
    <property type="match status" value="1"/>
</dbReference>
<dbReference type="NCBIfam" id="TIGR00631">
    <property type="entry name" value="uvrb"/>
    <property type="match status" value="1"/>
</dbReference>
<dbReference type="PANTHER" id="PTHR24029">
    <property type="entry name" value="UVRABC SYSTEM PROTEIN B"/>
    <property type="match status" value="1"/>
</dbReference>
<dbReference type="PANTHER" id="PTHR24029:SF0">
    <property type="entry name" value="UVRABC SYSTEM PROTEIN B"/>
    <property type="match status" value="1"/>
</dbReference>
<dbReference type="Pfam" id="PF00271">
    <property type="entry name" value="Helicase_C"/>
    <property type="match status" value="1"/>
</dbReference>
<dbReference type="Pfam" id="PF04851">
    <property type="entry name" value="ResIII"/>
    <property type="match status" value="1"/>
</dbReference>
<dbReference type="Pfam" id="PF02151">
    <property type="entry name" value="UVR"/>
    <property type="match status" value="1"/>
</dbReference>
<dbReference type="Pfam" id="PF12344">
    <property type="entry name" value="UvrB"/>
    <property type="match status" value="1"/>
</dbReference>
<dbReference type="Pfam" id="PF17757">
    <property type="entry name" value="UvrB_inter"/>
    <property type="match status" value="1"/>
</dbReference>
<dbReference type="SMART" id="SM00487">
    <property type="entry name" value="DEXDc"/>
    <property type="match status" value="1"/>
</dbReference>
<dbReference type="SMART" id="SM00490">
    <property type="entry name" value="HELICc"/>
    <property type="match status" value="1"/>
</dbReference>
<dbReference type="SUPFAM" id="SSF46600">
    <property type="entry name" value="C-terminal UvrC-binding domain of UvrB"/>
    <property type="match status" value="1"/>
</dbReference>
<dbReference type="SUPFAM" id="SSF52540">
    <property type="entry name" value="P-loop containing nucleoside triphosphate hydrolases"/>
    <property type="match status" value="2"/>
</dbReference>
<dbReference type="PROSITE" id="PS51192">
    <property type="entry name" value="HELICASE_ATP_BIND_1"/>
    <property type="match status" value="1"/>
</dbReference>
<dbReference type="PROSITE" id="PS51194">
    <property type="entry name" value="HELICASE_CTER"/>
    <property type="match status" value="1"/>
</dbReference>
<dbReference type="PROSITE" id="PS50151">
    <property type="entry name" value="UVR"/>
    <property type="match status" value="1"/>
</dbReference>
<name>UVRB_HYDCU</name>
<sequence length="678" mass="77034">MAKKFEIVSQYEPAGDQPVAITQLVEGLEDGEAFQTLLGVTGSGKTFTMANVIAKVQRPTIILAHNKTLAAQLYGEMKSFFPHNAVEYFVSYYDYYQPEAYVPASDTYIAKDSSVNEQIEQLRLSATKALMERKDVVLIATVSAIYGLGDPDQYLKMILQLRLGDTISQRDILQQLTTMQYTRNDVELWRGCFRVRGDVIDVFPAEAEEYAVRIELFDDEVDSLAWFDPLTGEVLTRPTRITVYPKSHYVTPKERVLQTIEQVKVELVSRLEELRSLNKLVEAQRLEERTRLDIEMMSELGYCSGIENYSRYLSGRASGEPPPTLLDYLPKNALMFIDESHVTIPQIGGMYKGDRSRKENLVTFGFRLPSAMDNRPMRFDEFEKIMPQTIFVSATPGKYEAEHESKIVEQVVRPTGLLDPVLEVRPALTQVDDLLGEIRLRVEKEERVLVTTLTKRMAENLTEYLEEHNVRVRYLHSDIDTVERIEIIRDLRLGEFDVLVGINLLREGLDIPEVSLVAILDADKEGFLRSDRSLIQTIGRAARNVAGKAILYADKITKSMQKAIDETERRRAKQIQHNTEQGITPQKLNKKITDILEDSPYAPKPGASAAKLKAAEADGEYSPQEMQRMTPAQLASEIKRMEKQMYQAAKDLDFELAAKLRDDLKRLKSSMVGVGDLR</sequence>
<accession>Q31ES7</accession>